<gene>
    <name evidence="1" type="primary">ftsH</name>
    <name type="ordered locus">SP_0013</name>
</gene>
<evidence type="ECO:0000255" key="1">
    <source>
        <dbReference type="HAMAP-Rule" id="MF_01458"/>
    </source>
</evidence>
<evidence type="ECO:0000256" key="2">
    <source>
        <dbReference type="SAM" id="MobiDB-lite"/>
    </source>
</evidence>
<evidence type="ECO:0000305" key="3"/>
<feature type="chain" id="PRO_0000084650" description="ATP-dependent zinc metalloprotease FtsH">
    <location>
        <begin position="1"/>
        <end position="652"/>
    </location>
</feature>
<feature type="topological domain" description="Cytoplasmic" evidence="1">
    <location>
        <begin position="1"/>
        <end position="11"/>
    </location>
</feature>
<feature type="transmembrane region" description="Helical" evidence="1">
    <location>
        <begin position="12"/>
        <end position="32"/>
    </location>
</feature>
<feature type="topological domain" description="Extracellular" evidence="1">
    <location>
        <begin position="33"/>
        <end position="131"/>
    </location>
</feature>
<feature type="transmembrane region" description="Helical" evidence="1">
    <location>
        <begin position="132"/>
        <end position="152"/>
    </location>
</feature>
<feature type="topological domain" description="Cytoplasmic" evidence="1">
    <location>
        <begin position="153"/>
        <end position="652"/>
    </location>
</feature>
<feature type="region of interest" description="Disordered" evidence="2">
    <location>
        <begin position="628"/>
        <end position="652"/>
    </location>
</feature>
<feature type="compositionally biased region" description="Basic and acidic residues" evidence="2">
    <location>
        <begin position="634"/>
        <end position="652"/>
    </location>
</feature>
<feature type="active site" evidence="1">
    <location>
        <position position="450"/>
    </location>
</feature>
<feature type="binding site" evidence="1">
    <location>
        <begin position="227"/>
        <end position="234"/>
    </location>
    <ligand>
        <name>ATP</name>
        <dbReference type="ChEBI" id="CHEBI:30616"/>
    </ligand>
</feature>
<feature type="binding site" evidence="1">
    <location>
        <position position="449"/>
    </location>
    <ligand>
        <name>Zn(2+)</name>
        <dbReference type="ChEBI" id="CHEBI:29105"/>
        <note>catalytic</note>
    </ligand>
</feature>
<feature type="binding site" evidence="1">
    <location>
        <position position="453"/>
    </location>
    <ligand>
        <name>Zn(2+)</name>
        <dbReference type="ChEBI" id="CHEBI:29105"/>
        <note>catalytic</note>
    </ligand>
</feature>
<feature type="binding site" evidence="1">
    <location>
        <position position="525"/>
    </location>
    <ligand>
        <name>Zn(2+)</name>
        <dbReference type="ChEBI" id="CHEBI:29105"/>
        <note>catalytic</note>
    </ligand>
</feature>
<feature type="sequence conflict" description="In Ref. 1; AAC16243." evidence="3" ref="1">
    <original>E</original>
    <variation>G</variation>
    <location>
        <position position="82"/>
    </location>
</feature>
<accession>O69076</accession>
<name>FTSH_STRPN</name>
<proteinExistence type="inferred from homology"/>
<keyword id="KW-0067">ATP-binding</keyword>
<keyword id="KW-1003">Cell membrane</keyword>
<keyword id="KW-0378">Hydrolase</keyword>
<keyword id="KW-0472">Membrane</keyword>
<keyword id="KW-0479">Metal-binding</keyword>
<keyword id="KW-0482">Metalloprotease</keyword>
<keyword id="KW-0547">Nucleotide-binding</keyword>
<keyword id="KW-0645">Protease</keyword>
<keyword id="KW-1185">Reference proteome</keyword>
<keyword id="KW-0812">Transmembrane</keyword>
<keyword id="KW-1133">Transmembrane helix</keyword>
<keyword id="KW-0862">Zinc</keyword>
<reference key="1">
    <citation type="journal article" date="1999" name="Taehan Misaengmul Hakhoe Chi">
        <title>Cloning and nucleotide sequence of Streptococcus pneumoniae ftsH gene.</title>
        <authorList>
            <person name="Kim H."/>
            <person name="Chung J.M."/>
            <person name="Lee E.H."/>
            <person name="Han Y.-H."/>
        </authorList>
    </citation>
    <scope>NUCLEOTIDE SEQUENCE [GENOMIC DNA]</scope>
    <source>
        <strain>D39 / NCTC 7466 / Serotype 2</strain>
    </source>
</reference>
<reference key="2">
    <citation type="journal article" date="2001" name="Science">
        <title>Complete genome sequence of a virulent isolate of Streptococcus pneumoniae.</title>
        <authorList>
            <person name="Tettelin H."/>
            <person name="Nelson K.E."/>
            <person name="Paulsen I.T."/>
            <person name="Eisen J.A."/>
            <person name="Read T.D."/>
            <person name="Peterson S.N."/>
            <person name="Heidelberg J.F."/>
            <person name="DeBoy R.T."/>
            <person name="Haft D.H."/>
            <person name="Dodson R.J."/>
            <person name="Durkin A.S."/>
            <person name="Gwinn M.L."/>
            <person name="Kolonay J.F."/>
            <person name="Nelson W.C."/>
            <person name="Peterson J.D."/>
            <person name="Umayam L.A."/>
            <person name="White O."/>
            <person name="Salzberg S.L."/>
            <person name="Lewis M.R."/>
            <person name="Radune D."/>
            <person name="Holtzapple E.K."/>
            <person name="Khouri H.M."/>
            <person name="Wolf A.M."/>
            <person name="Utterback T.R."/>
            <person name="Hansen C.L."/>
            <person name="McDonald L.A."/>
            <person name="Feldblyum T.V."/>
            <person name="Angiuoli S.V."/>
            <person name="Dickinson T."/>
            <person name="Hickey E.K."/>
            <person name="Holt I.E."/>
            <person name="Loftus B.J."/>
            <person name="Yang F."/>
            <person name="Smith H.O."/>
            <person name="Venter J.C."/>
            <person name="Dougherty B.A."/>
            <person name="Morrison D.A."/>
            <person name="Hollingshead S.K."/>
            <person name="Fraser C.M."/>
        </authorList>
    </citation>
    <scope>NUCLEOTIDE SEQUENCE [LARGE SCALE GENOMIC DNA]</scope>
    <source>
        <strain>ATCC BAA-334 / TIGR4</strain>
    </source>
</reference>
<sequence length="652" mass="71326">MKKQNNGLIKNPFLWLLFIFFLVTGFQYFYSGNNSGGSQQINYTELVQEITDGNVKELTYQPNGSVIEVSGVYKNPKTSKEETGIQFFTPSVTKVEKFTSTILPADTTVSELQKLATDHKAEVTVKHESSSGIWINLLVSIVPFGILFFFLFSMMGNMGGGNGRNPMSFGRSKAKAANKEDIKVRFSDVAGAEEEKQELVEVVEFLKDPKRFTKLGARIPAGVLLEGPPGTGKTLLAKAVAGEAGVPFFSISGSDFVEMFVGVGASRVRSLFEDAKKAAPAIIFIDEIDAVGRQRGVGLGGGNDEREQTLNQLLIEMDGFEGNEGIIVIAATNRSDVLDPALLRPGRFDRKVLVGRPDVKGREAILKVHAKNKPLAEDVDLKLVAQQTPGFVGADLENVLNEAALVAARRNKSIIDASDIDEAEDRVIAGPSKKDKTVSQKERELVAYHEAGHTIVGLVLSNARVVHKVTIVPRGRAGGYMIALPKEDQMLLSKEDMKEQLAGLMGGRVAEEIIFNVQTTGASNDFEQATQMARAMVTEYGMSEKLGPVQYEGNHAMLGAQSPQKSISEQTAYEIDEEVRSLLNEARNKAAEIIQSNRETHKLIAEALLKYETLDSTQIKALYETGKMPEAVEEESHALSYDEVKSKMNDEK</sequence>
<comment type="function">
    <text evidence="1">Acts as a processive, ATP-dependent zinc metallopeptidase for both cytoplasmic and membrane proteins. Plays a role in the quality control of integral membrane proteins.</text>
</comment>
<comment type="cofactor">
    <cofactor evidence="1">
        <name>Zn(2+)</name>
        <dbReference type="ChEBI" id="CHEBI:29105"/>
    </cofactor>
    <text evidence="1">Binds 1 zinc ion per subunit.</text>
</comment>
<comment type="subunit">
    <text evidence="1">Homohexamer.</text>
</comment>
<comment type="subcellular location">
    <subcellularLocation>
        <location evidence="1">Cell membrane</location>
        <topology evidence="1">Multi-pass membrane protein</topology>
        <orientation evidence="1">Cytoplasmic side</orientation>
    </subcellularLocation>
</comment>
<comment type="similarity">
    <text evidence="1">In the central section; belongs to the AAA ATPase family.</text>
</comment>
<comment type="similarity">
    <text evidence="1">In the C-terminal section; belongs to the peptidase M41 family.</text>
</comment>
<dbReference type="EC" id="3.4.24.-" evidence="1"/>
<dbReference type="EMBL" id="AF061748">
    <property type="protein sequence ID" value="AAC16243.2"/>
    <property type="molecule type" value="Genomic_DNA"/>
</dbReference>
<dbReference type="EMBL" id="AE005672">
    <property type="protein sequence ID" value="AAK74206.1"/>
    <property type="molecule type" value="Genomic_DNA"/>
</dbReference>
<dbReference type="PIR" id="D97873">
    <property type="entry name" value="D97873"/>
</dbReference>
<dbReference type="PIR" id="E95001">
    <property type="entry name" value="E95001"/>
</dbReference>
<dbReference type="RefSeq" id="WP_000744538.1">
    <property type="nucleotide sequence ID" value="NZ_CP155539.1"/>
</dbReference>
<dbReference type="SMR" id="O69076"/>
<dbReference type="MEROPS" id="M41.009"/>
<dbReference type="PaxDb" id="170187-SP_0013"/>
<dbReference type="EnsemblBacteria" id="AAK74206">
    <property type="protein sequence ID" value="AAK74206"/>
    <property type="gene ID" value="SP_0013"/>
</dbReference>
<dbReference type="KEGG" id="spn:SP_0013"/>
<dbReference type="eggNOG" id="COG0465">
    <property type="taxonomic scope" value="Bacteria"/>
</dbReference>
<dbReference type="PhylomeDB" id="O69076"/>
<dbReference type="BioCyc" id="SPNE170187:G1FZB-12-MONOMER"/>
<dbReference type="Proteomes" id="UP000000585">
    <property type="component" value="Chromosome"/>
</dbReference>
<dbReference type="GO" id="GO:0005886">
    <property type="term" value="C:plasma membrane"/>
    <property type="evidence" value="ECO:0007669"/>
    <property type="project" value="UniProtKB-SubCell"/>
</dbReference>
<dbReference type="GO" id="GO:0005524">
    <property type="term" value="F:ATP binding"/>
    <property type="evidence" value="ECO:0007669"/>
    <property type="project" value="UniProtKB-UniRule"/>
</dbReference>
<dbReference type="GO" id="GO:0016887">
    <property type="term" value="F:ATP hydrolysis activity"/>
    <property type="evidence" value="ECO:0007669"/>
    <property type="project" value="UniProtKB-UniRule"/>
</dbReference>
<dbReference type="GO" id="GO:0004176">
    <property type="term" value="F:ATP-dependent peptidase activity"/>
    <property type="evidence" value="ECO:0007669"/>
    <property type="project" value="InterPro"/>
</dbReference>
<dbReference type="GO" id="GO:0004222">
    <property type="term" value="F:metalloendopeptidase activity"/>
    <property type="evidence" value="ECO:0007669"/>
    <property type="project" value="InterPro"/>
</dbReference>
<dbReference type="GO" id="GO:0008270">
    <property type="term" value="F:zinc ion binding"/>
    <property type="evidence" value="ECO:0007669"/>
    <property type="project" value="UniProtKB-UniRule"/>
</dbReference>
<dbReference type="GO" id="GO:0030163">
    <property type="term" value="P:protein catabolic process"/>
    <property type="evidence" value="ECO:0007669"/>
    <property type="project" value="UniProtKB-UniRule"/>
</dbReference>
<dbReference type="GO" id="GO:0006508">
    <property type="term" value="P:proteolysis"/>
    <property type="evidence" value="ECO:0007669"/>
    <property type="project" value="UniProtKB-KW"/>
</dbReference>
<dbReference type="CDD" id="cd19501">
    <property type="entry name" value="RecA-like_FtsH"/>
    <property type="match status" value="1"/>
</dbReference>
<dbReference type="FunFam" id="1.10.8.60:FF:000001">
    <property type="entry name" value="ATP-dependent zinc metalloprotease FtsH"/>
    <property type="match status" value="1"/>
</dbReference>
<dbReference type="FunFam" id="1.20.58.760:FF:000001">
    <property type="entry name" value="ATP-dependent zinc metalloprotease FtsH"/>
    <property type="match status" value="1"/>
</dbReference>
<dbReference type="FunFam" id="3.40.50.300:FF:000001">
    <property type="entry name" value="ATP-dependent zinc metalloprotease FtsH"/>
    <property type="match status" value="1"/>
</dbReference>
<dbReference type="Gene3D" id="1.10.8.60">
    <property type="match status" value="1"/>
</dbReference>
<dbReference type="Gene3D" id="3.40.50.300">
    <property type="entry name" value="P-loop containing nucleotide triphosphate hydrolases"/>
    <property type="match status" value="1"/>
</dbReference>
<dbReference type="Gene3D" id="1.20.58.760">
    <property type="entry name" value="Peptidase M41"/>
    <property type="match status" value="1"/>
</dbReference>
<dbReference type="HAMAP" id="MF_01458">
    <property type="entry name" value="FtsH"/>
    <property type="match status" value="1"/>
</dbReference>
<dbReference type="InterPro" id="IPR003593">
    <property type="entry name" value="AAA+_ATPase"/>
</dbReference>
<dbReference type="InterPro" id="IPR041569">
    <property type="entry name" value="AAA_lid_3"/>
</dbReference>
<dbReference type="InterPro" id="IPR003959">
    <property type="entry name" value="ATPase_AAA_core"/>
</dbReference>
<dbReference type="InterPro" id="IPR003960">
    <property type="entry name" value="ATPase_AAA_CS"/>
</dbReference>
<dbReference type="InterPro" id="IPR005936">
    <property type="entry name" value="FtsH"/>
</dbReference>
<dbReference type="InterPro" id="IPR027417">
    <property type="entry name" value="P-loop_NTPase"/>
</dbReference>
<dbReference type="InterPro" id="IPR011546">
    <property type="entry name" value="Pept_M41_FtsH_extracell"/>
</dbReference>
<dbReference type="InterPro" id="IPR000642">
    <property type="entry name" value="Peptidase_M41"/>
</dbReference>
<dbReference type="InterPro" id="IPR037219">
    <property type="entry name" value="Peptidase_M41-like"/>
</dbReference>
<dbReference type="NCBIfam" id="TIGR01241">
    <property type="entry name" value="FtsH_fam"/>
    <property type="match status" value="1"/>
</dbReference>
<dbReference type="PANTHER" id="PTHR23076:SF113">
    <property type="entry name" value="ATP-DEPENDENT ZINC METALLOPROTEASE FTSH 1, CHLOROPLASTIC-RELATED"/>
    <property type="match status" value="1"/>
</dbReference>
<dbReference type="PANTHER" id="PTHR23076">
    <property type="entry name" value="METALLOPROTEASE M41 FTSH"/>
    <property type="match status" value="1"/>
</dbReference>
<dbReference type="Pfam" id="PF00004">
    <property type="entry name" value="AAA"/>
    <property type="match status" value="1"/>
</dbReference>
<dbReference type="Pfam" id="PF17862">
    <property type="entry name" value="AAA_lid_3"/>
    <property type="match status" value="1"/>
</dbReference>
<dbReference type="Pfam" id="PF06480">
    <property type="entry name" value="FtsH_ext"/>
    <property type="match status" value="1"/>
</dbReference>
<dbReference type="Pfam" id="PF01434">
    <property type="entry name" value="Peptidase_M41"/>
    <property type="match status" value="1"/>
</dbReference>
<dbReference type="SMART" id="SM00382">
    <property type="entry name" value="AAA"/>
    <property type="match status" value="1"/>
</dbReference>
<dbReference type="SUPFAM" id="SSF140990">
    <property type="entry name" value="FtsH protease domain-like"/>
    <property type="match status" value="1"/>
</dbReference>
<dbReference type="SUPFAM" id="SSF52540">
    <property type="entry name" value="P-loop containing nucleoside triphosphate hydrolases"/>
    <property type="match status" value="1"/>
</dbReference>
<dbReference type="PROSITE" id="PS00674">
    <property type="entry name" value="AAA"/>
    <property type="match status" value="1"/>
</dbReference>
<organism>
    <name type="scientific">Streptococcus pneumoniae serotype 4 (strain ATCC BAA-334 / TIGR4)</name>
    <dbReference type="NCBI Taxonomy" id="170187"/>
    <lineage>
        <taxon>Bacteria</taxon>
        <taxon>Bacillati</taxon>
        <taxon>Bacillota</taxon>
        <taxon>Bacilli</taxon>
        <taxon>Lactobacillales</taxon>
        <taxon>Streptococcaceae</taxon>
        <taxon>Streptococcus</taxon>
    </lineage>
</organism>
<protein>
    <recommendedName>
        <fullName evidence="1">ATP-dependent zinc metalloprotease FtsH</fullName>
        <ecNumber evidence="1">3.4.24.-</ecNumber>
    </recommendedName>
</protein>